<protein>
    <recommendedName>
        <fullName evidence="1">Anthranilate phosphoribosyltransferase</fullName>
        <ecNumber evidence="1">2.4.2.18</ecNumber>
    </recommendedName>
</protein>
<gene>
    <name evidence="1" type="primary">trpD</name>
    <name type="ordered locus">Amet_1079</name>
</gene>
<dbReference type="EC" id="2.4.2.18" evidence="1"/>
<dbReference type="EMBL" id="CP000724">
    <property type="protein sequence ID" value="ABR47291.1"/>
    <property type="status" value="ALT_INIT"/>
    <property type="molecule type" value="Genomic_DNA"/>
</dbReference>
<dbReference type="SMR" id="A6TM73"/>
<dbReference type="STRING" id="293826.Amet_1079"/>
<dbReference type="KEGG" id="amt:Amet_1079"/>
<dbReference type="eggNOG" id="COG0547">
    <property type="taxonomic scope" value="Bacteria"/>
</dbReference>
<dbReference type="HOGENOM" id="CLU_034315_2_1_9"/>
<dbReference type="OrthoDB" id="9806430at2"/>
<dbReference type="UniPathway" id="UPA00035">
    <property type="reaction ID" value="UER00041"/>
</dbReference>
<dbReference type="Proteomes" id="UP000001572">
    <property type="component" value="Chromosome"/>
</dbReference>
<dbReference type="GO" id="GO:0005829">
    <property type="term" value="C:cytosol"/>
    <property type="evidence" value="ECO:0007669"/>
    <property type="project" value="TreeGrafter"/>
</dbReference>
<dbReference type="GO" id="GO:0004048">
    <property type="term" value="F:anthranilate phosphoribosyltransferase activity"/>
    <property type="evidence" value="ECO:0007669"/>
    <property type="project" value="UniProtKB-UniRule"/>
</dbReference>
<dbReference type="GO" id="GO:0000287">
    <property type="term" value="F:magnesium ion binding"/>
    <property type="evidence" value="ECO:0007669"/>
    <property type="project" value="UniProtKB-UniRule"/>
</dbReference>
<dbReference type="GO" id="GO:0000162">
    <property type="term" value="P:L-tryptophan biosynthetic process"/>
    <property type="evidence" value="ECO:0007669"/>
    <property type="project" value="UniProtKB-UniRule"/>
</dbReference>
<dbReference type="FunFam" id="3.40.1030.10:FF:000002">
    <property type="entry name" value="Anthranilate phosphoribosyltransferase"/>
    <property type="match status" value="1"/>
</dbReference>
<dbReference type="Gene3D" id="3.40.1030.10">
    <property type="entry name" value="Nucleoside phosphorylase/phosphoribosyltransferase catalytic domain"/>
    <property type="match status" value="1"/>
</dbReference>
<dbReference type="Gene3D" id="1.20.970.10">
    <property type="entry name" value="Transferase, Pyrimidine Nucleoside Phosphorylase, Chain C"/>
    <property type="match status" value="1"/>
</dbReference>
<dbReference type="HAMAP" id="MF_00211">
    <property type="entry name" value="TrpD"/>
    <property type="match status" value="1"/>
</dbReference>
<dbReference type="InterPro" id="IPR005940">
    <property type="entry name" value="Anthranilate_Pribosyl_Tfrase"/>
</dbReference>
<dbReference type="InterPro" id="IPR000312">
    <property type="entry name" value="Glycosyl_Trfase_fam3"/>
</dbReference>
<dbReference type="InterPro" id="IPR017459">
    <property type="entry name" value="Glycosyl_Trfase_fam3_N_dom"/>
</dbReference>
<dbReference type="InterPro" id="IPR036320">
    <property type="entry name" value="Glycosyl_Trfase_fam3_N_dom_sf"/>
</dbReference>
<dbReference type="InterPro" id="IPR035902">
    <property type="entry name" value="Nuc_phospho_transferase"/>
</dbReference>
<dbReference type="NCBIfam" id="TIGR01245">
    <property type="entry name" value="trpD"/>
    <property type="match status" value="1"/>
</dbReference>
<dbReference type="PANTHER" id="PTHR43285">
    <property type="entry name" value="ANTHRANILATE PHOSPHORIBOSYLTRANSFERASE"/>
    <property type="match status" value="1"/>
</dbReference>
<dbReference type="PANTHER" id="PTHR43285:SF2">
    <property type="entry name" value="ANTHRANILATE PHOSPHORIBOSYLTRANSFERASE"/>
    <property type="match status" value="1"/>
</dbReference>
<dbReference type="Pfam" id="PF02885">
    <property type="entry name" value="Glycos_trans_3N"/>
    <property type="match status" value="1"/>
</dbReference>
<dbReference type="Pfam" id="PF00591">
    <property type="entry name" value="Glycos_transf_3"/>
    <property type="match status" value="1"/>
</dbReference>
<dbReference type="SUPFAM" id="SSF52418">
    <property type="entry name" value="Nucleoside phosphorylase/phosphoribosyltransferase catalytic domain"/>
    <property type="match status" value="1"/>
</dbReference>
<dbReference type="SUPFAM" id="SSF47648">
    <property type="entry name" value="Nucleoside phosphorylase/phosphoribosyltransferase N-terminal domain"/>
    <property type="match status" value="1"/>
</dbReference>
<comment type="function">
    <text evidence="1">Catalyzes the transfer of the phosphoribosyl group of 5-phosphorylribose-1-pyrophosphate (PRPP) to anthranilate to yield N-(5'-phosphoribosyl)-anthranilate (PRA).</text>
</comment>
<comment type="catalytic activity">
    <reaction evidence="1">
        <text>N-(5-phospho-beta-D-ribosyl)anthranilate + diphosphate = 5-phospho-alpha-D-ribose 1-diphosphate + anthranilate</text>
        <dbReference type="Rhea" id="RHEA:11768"/>
        <dbReference type="ChEBI" id="CHEBI:16567"/>
        <dbReference type="ChEBI" id="CHEBI:18277"/>
        <dbReference type="ChEBI" id="CHEBI:33019"/>
        <dbReference type="ChEBI" id="CHEBI:58017"/>
        <dbReference type="EC" id="2.4.2.18"/>
    </reaction>
</comment>
<comment type="cofactor">
    <cofactor evidence="1">
        <name>Mg(2+)</name>
        <dbReference type="ChEBI" id="CHEBI:18420"/>
    </cofactor>
    <text evidence="1">Binds 2 magnesium ions per monomer.</text>
</comment>
<comment type="pathway">
    <text evidence="1">Amino-acid biosynthesis; L-tryptophan biosynthesis; L-tryptophan from chorismate: step 2/5.</text>
</comment>
<comment type="subunit">
    <text evidence="1">Homodimer.</text>
</comment>
<comment type="similarity">
    <text evidence="1">Belongs to the anthranilate phosphoribosyltransferase family.</text>
</comment>
<comment type="sequence caution" evidence="2">
    <conflict type="erroneous initiation">
        <sequence resource="EMBL-CDS" id="ABR47291"/>
    </conflict>
    <text>Extended N-terminus.</text>
</comment>
<name>TRPD_ALKMQ</name>
<sequence>MMQQAIDKVIRRQDLAETEMMAVMQGIMEGKVTDSQIGGFLTALRMKGETVEEITASAKVMRSKALVVEVNQPHSIDTCGTGGDQANTFNISTAVAFVAAAAGVTVVKHGNRSVSSQCGSADVLEKLGVNIDLTPKQVETCVEQVNMGFMFAPKFHQAMKYAAAARRELGVRTIFNILGPLTNPAKVKGQVLGVFDESLTEVMAQVLKELGVERGMVVHGLDGLDEITTTTKTKVSELKNGMISNYVIDPRQFDIPLTDKEDLAGGDAEKNASIILNIVKGETGGKRNMVLINAGAAIYVGNAANSLQEGIDRAAEVIDMGLALDKLNQLIKLSQELKV</sequence>
<organism>
    <name type="scientific">Alkaliphilus metalliredigens (strain QYMF)</name>
    <dbReference type="NCBI Taxonomy" id="293826"/>
    <lineage>
        <taxon>Bacteria</taxon>
        <taxon>Bacillati</taxon>
        <taxon>Bacillota</taxon>
        <taxon>Clostridia</taxon>
        <taxon>Peptostreptococcales</taxon>
        <taxon>Natronincolaceae</taxon>
        <taxon>Alkaliphilus</taxon>
    </lineage>
</organism>
<proteinExistence type="inferred from homology"/>
<feature type="chain" id="PRO_0000325411" description="Anthranilate phosphoribosyltransferase">
    <location>
        <begin position="1"/>
        <end position="339"/>
    </location>
</feature>
<feature type="binding site" evidence="1">
    <location>
        <position position="80"/>
    </location>
    <ligand>
        <name>5-phospho-alpha-D-ribose 1-diphosphate</name>
        <dbReference type="ChEBI" id="CHEBI:58017"/>
    </ligand>
</feature>
<feature type="binding site" evidence="1">
    <location>
        <position position="80"/>
    </location>
    <ligand>
        <name>anthranilate</name>
        <dbReference type="ChEBI" id="CHEBI:16567"/>
        <label>1</label>
    </ligand>
</feature>
<feature type="binding site" evidence="1">
    <location>
        <begin position="83"/>
        <end position="84"/>
    </location>
    <ligand>
        <name>5-phospho-alpha-D-ribose 1-diphosphate</name>
        <dbReference type="ChEBI" id="CHEBI:58017"/>
    </ligand>
</feature>
<feature type="binding site" evidence="1">
    <location>
        <position position="88"/>
    </location>
    <ligand>
        <name>5-phospho-alpha-D-ribose 1-diphosphate</name>
        <dbReference type="ChEBI" id="CHEBI:58017"/>
    </ligand>
</feature>
<feature type="binding site" evidence="1">
    <location>
        <begin position="90"/>
        <end position="93"/>
    </location>
    <ligand>
        <name>5-phospho-alpha-D-ribose 1-diphosphate</name>
        <dbReference type="ChEBI" id="CHEBI:58017"/>
    </ligand>
</feature>
<feature type="binding site" evidence="1">
    <location>
        <position position="92"/>
    </location>
    <ligand>
        <name>Mg(2+)</name>
        <dbReference type="ChEBI" id="CHEBI:18420"/>
        <label>1</label>
    </ligand>
</feature>
<feature type="binding site" evidence="1">
    <location>
        <begin position="108"/>
        <end position="116"/>
    </location>
    <ligand>
        <name>5-phospho-alpha-D-ribose 1-diphosphate</name>
        <dbReference type="ChEBI" id="CHEBI:58017"/>
    </ligand>
</feature>
<feature type="binding site" evidence="1">
    <location>
        <position position="111"/>
    </location>
    <ligand>
        <name>anthranilate</name>
        <dbReference type="ChEBI" id="CHEBI:16567"/>
        <label>1</label>
    </ligand>
</feature>
<feature type="binding site" evidence="1">
    <location>
        <position position="120"/>
    </location>
    <ligand>
        <name>5-phospho-alpha-D-ribose 1-diphosphate</name>
        <dbReference type="ChEBI" id="CHEBI:58017"/>
    </ligand>
</feature>
<feature type="binding site" evidence="1">
    <location>
        <position position="166"/>
    </location>
    <ligand>
        <name>anthranilate</name>
        <dbReference type="ChEBI" id="CHEBI:16567"/>
        <label>2</label>
    </ligand>
</feature>
<feature type="binding site" evidence="1">
    <location>
        <position position="225"/>
    </location>
    <ligand>
        <name>Mg(2+)</name>
        <dbReference type="ChEBI" id="CHEBI:18420"/>
        <label>2</label>
    </ligand>
</feature>
<feature type="binding site" evidence="1">
    <location>
        <position position="226"/>
    </location>
    <ligand>
        <name>Mg(2+)</name>
        <dbReference type="ChEBI" id="CHEBI:18420"/>
        <label>1</label>
    </ligand>
</feature>
<feature type="binding site" evidence="1">
    <location>
        <position position="226"/>
    </location>
    <ligand>
        <name>Mg(2+)</name>
        <dbReference type="ChEBI" id="CHEBI:18420"/>
        <label>2</label>
    </ligand>
</feature>
<accession>A6TM73</accession>
<evidence type="ECO:0000255" key="1">
    <source>
        <dbReference type="HAMAP-Rule" id="MF_00211"/>
    </source>
</evidence>
<evidence type="ECO:0000305" key="2"/>
<keyword id="KW-0028">Amino-acid biosynthesis</keyword>
<keyword id="KW-0057">Aromatic amino acid biosynthesis</keyword>
<keyword id="KW-0328">Glycosyltransferase</keyword>
<keyword id="KW-0460">Magnesium</keyword>
<keyword id="KW-0479">Metal-binding</keyword>
<keyword id="KW-1185">Reference proteome</keyword>
<keyword id="KW-0808">Transferase</keyword>
<keyword id="KW-0822">Tryptophan biosynthesis</keyword>
<reference key="1">
    <citation type="journal article" date="2016" name="Genome Announc.">
        <title>Complete genome sequence of Alkaliphilus metalliredigens strain QYMF, an alkaliphilic and metal-reducing bacterium isolated from borax-contaminated leachate ponds.</title>
        <authorList>
            <person name="Hwang C."/>
            <person name="Copeland A."/>
            <person name="Lucas S."/>
            <person name="Lapidus A."/>
            <person name="Barry K."/>
            <person name="Detter J.C."/>
            <person name="Glavina Del Rio T."/>
            <person name="Hammon N."/>
            <person name="Israni S."/>
            <person name="Dalin E."/>
            <person name="Tice H."/>
            <person name="Pitluck S."/>
            <person name="Chertkov O."/>
            <person name="Brettin T."/>
            <person name="Bruce D."/>
            <person name="Han C."/>
            <person name="Schmutz J."/>
            <person name="Larimer F."/>
            <person name="Land M.L."/>
            <person name="Hauser L."/>
            <person name="Kyrpides N."/>
            <person name="Mikhailova N."/>
            <person name="Ye Q."/>
            <person name="Zhou J."/>
            <person name="Richardson P."/>
            <person name="Fields M.W."/>
        </authorList>
    </citation>
    <scope>NUCLEOTIDE SEQUENCE [LARGE SCALE GENOMIC DNA]</scope>
    <source>
        <strain>QYMF</strain>
    </source>
</reference>